<comment type="function">
    <text evidence="1">Disrupts the host outer membranes during host lysis.</text>
</comment>
<comment type="subcellular location">
    <subcellularLocation>
        <location evidence="1">Host cell outer membrane</location>
    </subcellularLocation>
    <subcellularLocation>
        <location evidence="1">Host cell inner membrane</location>
    </subcellularLocation>
    <text evidence="3">Probably binds to the inner membrane then passes through to the outer membrane.</text>
</comment>
<dbReference type="EMBL" id="JN882298">
    <property type="protein sequence ID" value="AEZ65111.1"/>
    <property type="molecule type" value="Genomic_DNA"/>
</dbReference>
<dbReference type="RefSeq" id="YP_007006611.1">
    <property type="nucleotide sequence ID" value="NC_019520.1"/>
</dbReference>
<dbReference type="GeneID" id="14012109"/>
<dbReference type="KEGG" id="vg:14012109"/>
<dbReference type="Proteomes" id="UP000009054">
    <property type="component" value="Genome"/>
</dbReference>
<dbReference type="GO" id="GO:0020002">
    <property type="term" value="C:host cell plasma membrane"/>
    <property type="evidence" value="ECO:0007669"/>
    <property type="project" value="UniProtKB-SubCell"/>
</dbReference>
<dbReference type="GO" id="GO:0016020">
    <property type="term" value="C:membrane"/>
    <property type="evidence" value="ECO:0007669"/>
    <property type="project" value="UniProtKB-KW"/>
</dbReference>
<dbReference type="GO" id="GO:0031640">
    <property type="term" value="P:killing of cells of another organism"/>
    <property type="evidence" value="ECO:0007669"/>
    <property type="project" value="UniProtKB-KW"/>
</dbReference>
<organism>
    <name type="scientific">Escherichia phage phiKT</name>
    <dbReference type="NCBI Taxonomy" id="1141519"/>
    <lineage>
        <taxon>Viruses</taxon>
        <taxon>Duplodnaviria</taxon>
        <taxon>Heunggongvirae</taxon>
        <taxon>Uroviricota</taxon>
        <taxon>Caudoviricetes</taxon>
        <taxon>Autographiviridae</taxon>
        <taxon>Ermolevavirus</taxon>
        <taxon>Ermolevavirus PhiKT</taxon>
    </lineage>
</organism>
<feature type="chain" id="PRO_0000456426" description="Disruptin gp28">
    <location>
        <begin position="1"/>
        <end position="56"/>
    </location>
</feature>
<name>DISRP_BPPKT</name>
<reference key="1">
    <citation type="submission" date="2011-10" db="EMBL/GenBank/DDBJ databases">
        <authorList>
            <person name="Tarasyan K.K."/>
            <person name="Kulikov E.E."/>
            <person name="Letarov A.V."/>
        </authorList>
    </citation>
    <scope>NUCLEOTIDE SEQUENCE [LARGE SCALE GENOMIC DNA]</scope>
</reference>
<reference key="2">
    <citation type="journal article" date="2021" name="J. Bacteriol.">
        <title>Phage-encoded cationic antimicrobial peptide required for lysis.</title>
        <authorList>
            <person name="Holt A."/>
            <person name="Cahill J."/>
            <person name="Ramsey J."/>
            <person name="Martin C."/>
            <person name="O'Leary C."/>
            <person name="Moreland R."/>
            <person name="Maddox L.T."/>
            <person name="Galbadage T."/>
            <person name="Sharan R."/>
            <person name="Sule P."/>
            <person name="Cirillo J.D."/>
            <person name="Young R."/>
        </authorList>
    </citation>
    <scope>FUNCTION</scope>
</reference>
<evidence type="ECO:0000269" key="1">
    <source>
    </source>
</evidence>
<evidence type="ECO:0000303" key="2">
    <source>
    </source>
</evidence>
<evidence type="ECO:0000305" key="3">
    <source>
    </source>
</evidence>
<evidence type="ECO:0000312" key="4">
    <source>
        <dbReference type="EMBL" id="AEZ65111.1"/>
    </source>
</evidence>
<proteinExistence type="predicted"/>
<gene>
    <name evidence="4" type="ORF">phiKT_00028</name>
</gene>
<protein>
    <recommendedName>
        <fullName evidence="2">Disruptin gp28</fullName>
    </recommendedName>
</protein>
<keyword id="KW-0929">Antimicrobial</keyword>
<keyword id="KW-0204">Cytolysis</keyword>
<keyword id="KW-1030">Host cell inner membrane</keyword>
<keyword id="KW-0578">Host cell lysis by virus</keyword>
<keyword id="KW-1032">Host cell membrane</keyword>
<keyword id="KW-1033">Host cell outer membrane</keyword>
<keyword id="KW-1043">Host membrane</keyword>
<keyword id="KW-0472">Membrane</keyword>
<keyword id="KW-1185">Reference proteome</keyword>
<keyword id="KW-1188">Viral release from host cell</keyword>
<sequence>MSKFKKYLGAAWDFTKEHGVTILRGVAVLLVGRKVGRVANQSADVLDTVIKGTKKN</sequence>
<organismHost>
    <name type="scientific">Escherichia coli</name>
    <dbReference type="NCBI Taxonomy" id="562"/>
</organismHost>
<accession>H6VUC3</accession>